<proteinExistence type="inferred from homology"/>
<name>RL33_PROM2</name>
<protein>
    <recommendedName>
        <fullName evidence="1">Large ribosomal subunit protein bL33</fullName>
    </recommendedName>
    <alternativeName>
        <fullName evidence="3">50S ribosomal protein L33</fullName>
    </alternativeName>
</protein>
<organism>
    <name type="scientific">Prochlorococcus marinus (strain MIT 9215)</name>
    <dbReference type="NCBI Taxonomy" id="93060"/>
    <lineage>
        <taxon>Bacteria</taxon>
        <taxon>Bacillati</taxon>
        <taxon>Cyanobacteriota</taxon>
        <taxon>Cyanophyceae</taxon>
        <taxon>Synechococcales</taxon>
        <taxon>Prochlorococcaceae</taxon>
        <taxon>Prochlorococcus</taxon>
    </lineage>
</organism>
<sequence length="64" mass="7502">MAKKGTRVVVTLECTEARTSTDPKRSNGVSRYTTEKNRRNTTERLELKKFNPHLNRMTIHKEIK</sequence>
<keyword id="KW-0687">Ribonucleoprotein</keyword>
<keyword id="KW-0689">Ribosomal protein</keyword>
<accession>A8G4V7</accession>
<reference key="1">
    <citation type="journal article" date="2007" name="PLoS Genet.">
        <title>Patterns and implications of gene gain and loss in the evolution of Prochlorococcus.</title>
        <authorList>
            <person name="Kettler G.C."/>
            <person name="Martiny A.C."/>
            <person name="Huang K."/>
            <person name="Zucker J."/>
            <person name="Coleman M.L."/>
            <person name="Rodrigue S."/>
            <person name="Chen F."/>
            <person name="Lapidus A."/>
            <person name="Ferriera S."/>
            <person name="Johnson J."/>
            <person name="Steglich C."/>
            <person name="Church G.M."/>
            <person name="Richardson P."/>
            <person name="Chisholm S.W."/>
        </authorList>
    </citation>
    <scope>NUCLEOTIDE SEQUENCE [LARGE SCALE GENOMIC DNA]</scope>
    <source>
        <strain>MIT 9215</strain>
    </source>
</reference>
<gene>
    <name evidence="1" type="primary">rpmG</name>
    <name evidence="1" type="synonym">rpl33</name>
    <name type="ordered locus">P9215_10231</name>
</gene>
<dbReference type="EMBL" id="CP000825">
    <property type="protein sequence ID" value="ABV50638.1"/>
    <property type="status" value="ALT_INIT"/>
    <property type="molecule type" value="Genomic_DNA"/>
</dbReference>
<dbReference type="RefSeq" id="WP_002805540.1">
    <property type="nucleotide sequence ID" value="NC_009840.1"/>
</dbReference>
<dbReference type="SMR" id="A8G4V7"/>
<dbReference type="STRING" id="93060.P9215_10231"/>
<dbReference type="KEGG" id="pmh:P9215_10231"/>
<dbReference type="eggNOG" id="COG0267">
    <property type="taxonomic scope" value="Bacteria"/>
</dbReference>
<dbReference type="HOGENOM" id="CLU_190949_3_0_3"/>
<dbReference type="OrthoDB" id="9801333at2"/>
<dbReference type="Proteomes" id="UP000002014">
    <property type="component" value="Chromosome"/>
</dbReference>
<dbReference type="GO" id="GO:0005737">
    <property type="term" value="C:cytoplasm"/>
    <property type="evidence" value="ECO:0007669"/>
    <property type="project" value="UniProtKB-ARBA"/>
</dbReference>
<dbReference type="GO" id="GO:1990904">
    <property type="term" value="C:ribonucleoprotein complex"/>
    <property type="evidence" value="ECO:0007669"/>
    <property type="project" value="UniProtKB-KW"/>
</dbReference>
<dbReference type="GO" id="GO:0005840">
    <property type="term" value="C:ribosome"/>
    <property type="evidence" value="ECO:0007669"/>
    <property type="project" value="UniProtKB-KW"/>
</dbReference>
<dbReference type="GO" id="GO:0003735">
    <property type="term" value="F:structural constituent of ribosome"/>
    <property type="evidence" value="ECO:0007669"/>
    <property type="project" value="InterPro"/>
</dbReference>
<dbReference type="GO" id="GO:0006412">
    <property type="term" value="P:translation"/>
    <property type="evidence" value="ECO:0007669"/>
    <property type="project" value="UniProtKB-UniRule"/>
</dbReference>
<dbReference type="Gene3D" id="2.20.28.120">
    <property type="entry name" value="Ribosomal protein L33"/>
    <property type="match status" value="1"/>
</dbReference>
<dbReference type="HAMAP" id="MF_00294">
    <property type="entry name" value="Ribosomal_bL33"/>
    <property type="match status" value="1"/>
</dbReference>
<dbReference type="InterPro" id="IPR001705">
    <property type="entry name" value="Ribosomal_bL33"/>
</dbReference>
<dbReference type="InterPro" id="IPR038584">
    <property type="entry name" value="Ribosomal_bL33_sf"/>
</dbReference>
<dbReference type="InterPro" id="IPR011332">
    <property type="entry name" value="Ribosomal_zn-bd"/>
</dbReference>
<dbReference type="NCBIfam" id="NF001764">
    <property type="entry name" value="PRK00504.1"/>
    <property type="match status" value="1"/>
</dbReference>
<dbReference type="NCBIfam" id="NF001860">
    <property type="entry name" value="PRK00595.1"/>
    <property type="match status" value="1"/>
</dbReference>
<dbReference type="NCBIfam" id="TIGR01023">
    <property type="entry name" value="rpmG_bact"/>
    <property type="match status" value="1"/>
</dbReference>
<dbReference type="PANTHER" id="PTHR43168">
    <property type="entry name" value="50S RIBOSOMAL PROTEIN L33, CHLOROPLASTIC"/>
    <property type="match status" value="1"/>
</dbReference>
<dbReference type="PANTHER" id="PTHR43168:SF2">
    <property type="entry name" value="LARGE RIBOSOMAL SUBUNIT PROTEIN BL33C"/>
    <property type="match status" value="1"/>
</dbReference>
<dbReference type="Pfam" id="PF00471">
    <property type="entry name" value="Ribosomal_L33"/>
    <property type="match status" value="1"/>
</dbReference>
<dbReference type="SUPFAM" id="SSF57829">
    <property type="entry name" value="Zn-binding ribosomal proteins"/>
    <property type="match status" value="1"/>
</dbReference>
<comment type="similarity">
    <text evidence="1">Belongs to the bacterial ribosomal protein bL33 family.</text>
</comment>
<comment type="sequence caution" evidence="3">
    <conflict type="erroneous initiation">
        <sequence resource="EMBL-CDS" id="ABV50638"/>
    </conflict>
</comment>
<feature type="chain" id="PRO_0000356610" description="Large ribosomal subunit protein bL33">
    <location>
        <begin position="1"/>
        <end position="64"/>
    </location>
</feature>
<feature type="region of interest" description="Disordered" evidence="2">
    <location>
        <begin position="19"/>
        <end position="40"/>
    </location>
</feature>
<evidence type="ECO:0000255" key="1">
    <source>
        <dbReference type="HAMAP-Rule" id="MF_00294"/>
    </source>
</evidence>
<evidence type="ECO:0000256" key="2">
    <source>
        <dbReference type="SAM" id="MobiDB-lite"/>
    </source>
</evidence>
<evidence type="ECO:0000305" key="3"/>